<keyword id="KW-0112">Calmodulin-binding</keyword>
<keyword id="KW-1003">Cell membrane</keyword>
<keyword id="KW-0472">Membrane</keyword>
<keyword id="KW-0539">Nucleus</keyword>
<keyword id="KW-1185">Reference proteome</keyword>
<keyword id="KW-0677">Repeat</keyword>
<name>IQD20_ARATH</name>
<evidence type="ECO:0000250" key="1">
    <source>
        <dbReference type="UniProtKB" id="Q9SF32"/>
    </source>
</evidence>
<evidence type="ECO:0000255" key="2">
    <source>
        <dbReference type="PROSITE-ProRule" id="PRU00116"/>
    </source>
</evidence>
<evidence type="ECO:0000269" key="3">
    <source>
    </source>
</evidence>
<evidence type="ECO:0000269" key="4">
    <source>
    </source>
</evidence>
<evidence type="ECO:0000269" key="5">
    <source>
    </source>
</evidence>
<evidence type="ECO:0000303" key="6">
    <source>
    </source>
</evidence>
<evidence type="ECO:0000305" key="7"/>
<evidence type="ECO:0000312" key="8">
    <source>
        <dbReference type="Araport" id="AT3G51380"/>
    </source>
</evidence>
<evidence type="ECO:0000312" key="9">
    <source>
        <dbReference type="EMBL" id="CAB63002.1"/>
    </source>
</evidence>
<accession>Q9SD11</accession>
<accession>A0A178VJQ2</accession>
<reference key="1">
    <citation type="journal article" date="2000" name="Nature">
        <title>Sequence and analysis of chromosome 3 of the plant Arabidopsis thaliana.</title>
        <authorList>
            <person name="Salanoubat M."/>
            <person name="Lemcke K."/>
            <person name="Rieger M."/>
            <person name="Ansorge W."/>
            <person name="Unseld M."/>
            <person name="Fartmann B."/>
            <person name="Valle G."/>
            <person name="Bloecker H."/>
            <person name="Perez-Alonso M."/>
            <person name="Obermaier B."/>
            <person name="Delseny M."/>
            <person name="Boutry M."/>
            <person name="Grivell L.A."/>
            <person name="Mache R."/>
            <person name="Puigdomenech P."/>
            <person name="De Simone V."/>
            <person name="Choisne N."/>
            <person name="Artiguenave F."/>
            <person name="Robert C."/>
            <person name="Brottier P."/>
            <person name="Wincker P."/>
            <person name="Cattolico L."/>
            <person name="Weissenbach J."/>
            <person name="Saurin W."/>
            <person name="Quetier F."/>
            <person name="Schaefer M."/>
            <person name="Mueller-Auer S."/>
            <person name="Gabel C."/>
            <person name="Fuchs M."/>
            <person name="Benes V."/>
            <person name="Wurmbach E."/>
            <person name="Drzonek H."/>
            <person name="Erfle H."/>
            <person name="Jordan N."/>
            <person name="Bangert S."/>
            <person name="Wiedelmann R."/>
            <person name="Kranz H."/>
            <person name="Voss H."/>
            <person name="Holland R."/>
            <person name="Brandt P."/>
            <person name="Nyakatura G."/>
            <person name="Vezzi A."/>
            <person name="D'Angelo M."/>
            <person name="Pallavicini A."/>
            <person name="Toppo S."/>
            <person name="Simionati B."/>
            <person name="Conrad A."/>
            <person name="Hornischer K."/>
            <person name="Kauer G."/>
            <person name="Loehnert T.-H."/>
            <person name="Nordsiek G."/>
            <person name="Reichelt J."/>
            <person name="Scharfe M."/>
            <person name="Schoen O."/>
            <person name="Bargues M."/>
            <person name="Terol J."/>
            <person name="Climent J."/>
            <person name="Navarro P."/>
            <person name="Collado C."/>
            <person name="Perez-Perez A."/>
            <person name="Ottenwaelder B."/>
            <person name="Duchemin D."/>
            <person name="Cooke R."/>
            <person name="Laudie M."/>
            <person name="Berger-Llauro C."/>
            <person name="Purnelle B."/>
            <person name="Masuy D."/>
            <person name="de Haan M."/>
            <person name="Maarse A.C."/>
            <person name="Alcaraz J.-P."/>
            <person name="Cottet A."/>
            <person name="Casacuberta E."/>
            <person name="Monfort A."/>
            <person name="Argiriou A."/>
            <person name="Flores M."/>
            <person name="Liguori R."/>
            <person name="Vitale D."/>
            <person name="Mannhaupt G."/>
            <person name="Haase D."/>
            <person name="Schoof H."/>
            <person name="Rudd S."/>
            <person name="Zaccaria P."/>
            <person name="Mewes H.-W."/>
            <person name="Mayer K.F.X."/>
            <person name="Kaul S."/>
            <person name="Town C.D."/>
            <person name="Koo H.L."/>
            <person name="Tallon L.J."/>
            <person name="Jenkins J."/>
            <person name="Rooney T."/>
            <person name="Rizzo M."/>
            <person name="Walts A."/>
            <person name="Utterback T."/>
            <person name="Fujii C.Y."/>
            <person name="Shea T.P."/>
            <person name="Creasy T.H."/>
            <person name="Haas B."/>
            <person name="Maiti R."/>
            <person name="Wu D."/>
            <person name="Peterson J."/>
            <person name="Van Aken S."/>
            <person name="Pai G."/>
            <person name="Militscher J."/>
            <person name="Sellers P."/>
            <person name="Gill J.E."/>
            <person name="Feldblyum T.V."/>
            <person name="Preuss D."/>
            <person name="Lin X."/>
            <person name="Nierman W.C."/>
            <person name="Salzberg S.L."/>
            <person name="White O."/>
            <person name="Venter J.C."/>
            <person name="Fraser C.M."/>
            <person name="Kaneko T."/>
            <person name="Nakamura Y."/>
            <person name="Sato S."/>
            <person name="Kato T."/>
            <person name="Asamizu E."/>
            <person name="Sasamoto S."/>
            <person name="Kimura T."/>
            <person name="Idesawa K."/>
            <person name="Kawashima K."/>
            <person name="Kishida Y."/>
            <person name="Kiyokawa C."/>
            <person name="Kohara M."/>
            <person name="Matsumoto M."/>
            <person name="Matsuno A."/>
            <person name="Muraki A."/>
            <person name="Nakayama S."/>
            <person name="Nakazaki N."/>
            <person name="Shinpo S."/>
            <person name="Takeuchi C."/>
            <person name="Wada T."/>
            <person name="Watanabe A."/>
            <person name="Yamada M."/>
            <person name="Yasuda M."/>
            <person name="Tabata S."/>
        </authorList>
    </citation>
    <scope>NUCLEOTIDE SEQUENCE [LARGE SCALE GENOMIC DNA]</scope>
    <source>
        <strain>cv. Columbia</strain>
    </source>
</reference>
<reference key="2">
    <citation type="journal article" date="2017" name="Plant J.">
        <title>Araport11: a complete reannotation of the Arabidopsis thaliana reference genome.</title>
        <authorList>
            <person name="Cheng C.Y."/>
            <person name="Krishnakumar V."/>
            <person name="Chan A.P."/>
            <person name="Thibaud-Nissen F."/>
            <person name="Schobel S."/>
            <person name="Town C.D."/>
        </authorList>
    </citation>
    <scope>GENOME REANNOTATION</scope>
    <source>
        <strain>cv. Columbia</strain>
    </source>
</reference>
<reference key="3">
    <citation type="submission" date="2006-12" db="EMBL/GenBank/DDBJ databases">
        <title>Arabidopsis ORF clones.</title>
        <authorList>
            <person name="Bautista V.R."/>
            <person name="Kim C.J."/>
            <person name="Chen H."/>
            <person name="Quinitio C."/>
            <person name="Ecker J.R."/>
        </authorList>
    </citation>
    <scope>NUCLEOTIDE SEQUENCE [LARGE SCALE MRNA]</scope>
    <source>
        <strain>cv. Columbia</strain>
    </source>
</reference>
<reference key="4">
    <citation type="journal article" date="2005" name="BMC Evol. Biol.">
        <title>Genome-wide comparative analysis of the IQD gene families in Arabidopsis thaliana and Oryza sativa.</title>
        <authorList>
            <person name="Abel S."/>
            <person name="Savchenko T."/>
            <person name="Levy M."/>
        </authorList>
    </citation>
    <scope>INTERACTION WITH CALMODULIN</scope>
    <scope>GENE FAMILY</scope>
    <scope>NOMENCLATURE</scope>
    <source>
        <strain>cv. Columbia</strain>
    </source>
</reference>
<reference key="5">
    <citation type="journal article" date="2013" name="J. Biol. Chem.">
        <title>Arabidopsis calmodulin-binding protein IQ67-domain 1 localizes to microtubules and interacts with kinesin light chain-related protein-1.</title>
        <authorList>
            <person name="Buerstenbinder K."/>
            <person name="Savchenko T."/>
            <person name="Mueller J."/>
            <person name="Adamson A.W."/>
            <person name="Stamm G."/>
            <person name="Kwong R."/>
            <person name="Zipp B.J."/>
            <person name="Dinesh D.C."/>
            <person name="Abel S."/>
        </authorList>
    </citation>
    <scope>INTERACTION WITH CALMODULIN</scope>
</reference>
<reference key="6">
    <citation type="journal article" date="2017" name="Plant Physiol.">
        <title>The IQD family of calmodulin-binding proteins links calcium signaling to microtubules, membrane subdomains, and the nucleus.</title>
        <authorList>
            <person name="Buerstenbinder K."/>
            <person name="Moeller B."/>
            <person name="Ploetner R."/>
            <person name="Stamm G."/>
            <person name="Hause G."/>
            <person name="Mitra D."/>
            <person name="Abel S."/>
        </authorList>
    </citation>
    <scope>SUBCELLULAR LOCATION</scope>
    <scope>INTERACTION WITH CALMODULIN</scope>
    <source>
        <strain>cv. Columbia</strain>
    </source>
</reference>
<reference key="7">
    <citation type="journal article" date="2017" name="Plant Signal. Behav.">
        <title>Functions of IQD proteins as hubs in cellular calcium and auxin signaling: A toolbox for shape formation and tissue-specification in plants?</title>
        <authorList>
            <person name="Buerstenbinder K."/>
            <person name="Mitra D."/>
            <person name="Quegwer J."/>
        </authorList>
    </citation>
    <scope>REVIEW</scope>
</reference>
<dbReference type="EMBL" id="AL133452">
    <property type="protein sequence ID" value="CAB63002.1"/>
    <property type="molecule type" value="Genomic_DNA"/>
</dbReference>
<dbReference type="EMBL" id="CP002686">
    <property type="protein sequence ID" value="AEE78786.1"/>
    <property type="molecule type" value="Genomic_DNA"/>
</dbReference>
<dbReference type="EMBL" id="BT029478">
    <property type="protein sequence ID" value="ABL66735.1"/>
    <property type="molecule type" value="mRNA"/>
</dbReference>
<dbReference type="PIR" id="T45769">
    <property type="entry name" value="T45769"/>
</dbReference>
<dbReference type="RefSeq" id="NP_190706.1">
    <property type="nucleotide sequence ID" value="NM_114997.2"/>
</dbReference>
<dbReference type="SMR" id="Q9SD11"/>
<dbReference type="FunCoup" id="Q9SD11">
    <property type="interactions" value="1"/>
</dbReference>
<dbReference type="STRING" id="3702.Q9SD11"/>
<dbReference type="PaxDb" id="3702-AT3G51380.1"/>
<dbReference type="EnsemblPlants" id="AT3G51380.1">
    <property type="protein sequence ID" value="AT3G51380.1"/>
    <property type="gene ID" value="AT3G51380"/>
</dbReference>
<dbReference type="GeneID" id="824301"/>
<dbReference type="Gramene" id="AT3G51380.1">
    <property type="protein sequence ID" value="AT3G51380.1"/>
    <property type="gene ID" value="AT3G51380"/>
</dbReference>
<dbReference type="KEGG" id="ath:AT3G51380"/>
<dbReference type="Araport" id="AT3G51380"/>
<dbReference type="TAIR" id="AT3G51380">
    <property type="gene designation" value="IQD20"/>
</dbReference>
<dbReference type="eggNOG" id="ENOG502S4SI">
    <property type="taxonomic scope" value="Eukaryota"/>
</dbReference>
<dbReference type="HOGENOM" id="CLU_118788_0_0_1"/>
<dbReference type="InParanoid" id="Q9SD11"/>
<dbReference type="OMA" id="IKLQACF"/>
<dbReference type="OrthoDB" id="694295at2759"/>
<dbReference type="PhylomeDB" id="Q9SD11"/>
<dbReference type="PRO" id="PR:Q9SD11"/>
<dbReference type="Proteomes" id="UP000006548">
    <property type="component" value="Chromosome 3"/>
</dbReference>
<dbReference type="ExpressionAtlas" id="Q9SD11">
    <property type="expression patterns" value="baseline and differential"/>
</dbReference>
<dbReference type="GO" id="GO:0005730">
    <property type="term" value="C:nucleolus"/>
    <property type="evidence" value="ECO:0000314"/>
    <property type="project" value="UniProtKB"/>
</dbReference>
<dbReference type="GO" id="GO:0005886">
    <property type="term" value="C:plasma membrane"/>
    <property type="evidence" value="ECO:0000314"/>
    <property type="project" value="UniProtKB"/>
</dbReference>
<dbReference type="GO" id="GO:0005516">
    <property type="term" value="F:calmodulin binding"/>
    <property type="evidence" value="ECO:0000314"/>
    <property type="project" value="UniProtKB"/>
</dbReference>
<dbReference type="GO" id="GO:0051592">
    <property type="term" value="P:response to calcium ion"/>
    <property type="evidence" value="ECO:0000314"/>
    <property type="project" value="UniProtKB"/>
</dbReference>
<dbReference type="Gene3D" id="1.20.5.190">
    <property type="match status" value="1"/>
</dbReference>
<dbReference type="InterPro" id="IPR000048">
    <property type="entry name" value="IQ_motif_EF-hand-BS"/>
</dbReference>
<dbReference type="PANTHER" id="PTHR32295">
    <property type="entry name" value="IQ-DOMAIN 5-RELATED"/>
    <property type="match status" value="1"/>
</dbReference>
<dbReference type="PANTHER" id="PTHR32295:SF108">
    <property type="entry name" value="PROTEIN IQ-DOMAIN 20"/>
    <property type="match status" value="1"/>
</dbReference>
<dbReference type="Pfam" id="PF00612">
    <property type="entry name" value="IQ"/>
    <property type="match status" value="2"/>
</dbReference>
<dbReference type="SMART" id="SM00015">
    <property type="entry name" value="IQ"/>
    <property type="match status" value="2"/>
</dbReference>
<dbReference type="PROSITE" id="PS50096">
    <property type="entry name" value="IQ"/>
    <property type="match status" value="2"/>
</dbReference>
<sequence length="103" mass="11817">MANSKRLFGVVRRKLLRRSQSRITIIRSSAPETTREEIAAVKIQAFFRGHLARRAFKALKSLVKLQAVARGVLVRRQARIALHCMHALARLQVRVRARQLLSH</sequence>
<comment type="function">
    <text evidence="1">May be involved in cooperative interactions with calmodulins or calmodulin-like proteins (By similarity). Recruits calmodulin proteins to microtubules, thus being a potential scaffold in cellular signaling and trafficking (By similarity). May associate with nucleic acids and regulate gene expression at the transcriptional or post-transcriptional level (By similarity).</text>
</comment>
<comment type="subunit">
    <text evidence="1 3 4 5">Interacts with calmodulin (CaM and CML) at the plasma membrane in a calcium ion Ca(2+)- independent manner, however, Ca(2+) seems to modulate calmodulin binding (PubMed:16368012, PubMed:23204523, PubMed:28115582). Binds to multiple calmodulin (CaM) in the presence of Ca(2+) and CaM-like proteins (By similarity).</text>
</comment>
<comment type="subcellular location">
    <subcellularLocation>
        <location evidence="5">Nucleus</location>
        <location evidence="5">Nucleolus</location>
    </subcellularLocation>
    <subcellularLocation>
        <location evidence="5">Cell membrane</location>
    </subcellularLocation>
    <text evidence="5">Recruits calmodulin (CaM2) at plasma membrane subdomains.</text>
</comment>
<comment type="similarity">
    <text evidence="7">Belongs to the IQD family.</text>
</comment>
<feature type="chain" id="PRO_0000449124" description="Protein IQ-DOMAIN 20">
    <location>
        <begin position="1"/>
        <end position="103"/>
    </location>
</feature>
<feature type="domain" description="IQ 1" evidence="2">
    <location>
        <begin position="36"/>
        <end position="62"/>
    </location>
</feature>
<feature type="domain" description="IQ 2" evidence="2">
    <location>
        <begin position="63"/>
        <end position="87"/>
    </location>
</feature>
<feature type="region of interest" description="Calmodulin-binding" evidence="6">
    <location>
        <begin position="10"/>
        <end position="22"/>
    </location>
</feature>
<protein>
    <recommendedName>
        <fullName evidence="6">Protein IQ-DOMAIN 20</fullName>
        <shortName evidence="6">AtIQD20</shortName>
    </recommendedName>
</protein>
<gene>
    <name evidence="6" type="primary">IQD20</name>
    <name evidence="8" type="ordered locus">At3g51380</name>
    <name evidence="9" type="ORF">F26O13.20</name>
</gene>
<proteinExistence type="evidence at protein level"/>
<organism>
    <name type="scientific">Arabidopsis thaliana</name>
    <name type="common">Mouse-ear cress</name>
    <dbReference type="NCBI Taxonomy" id="3702"/>
    <lineage>
        <taxon>Eukaryota</taxon>
        <taxon>Viridiplantae</taxon>
        <taxon>Streptophyta</taxon>
        <taxon>Embryophyta</taxon>
        <taxon>Tracheophyta</taxon>
        <taxon>Spermatophyta</taxon>
        <taxon>Magnoliopsida</taxon>
        <taxon>eudicotyledons</taxon>
        <taxon>Gunneridae</taxon>
        <taxon>Pentapetalae</taxon>
        <taxon>rosids</taxon>
        <taxon>malvids</taxon>
        <taxon>Brassicales</taxon>
        <taxon>Brassicaceae</taxon>
        <taxon>Camelineae</taxon>
        <taxon>Arabidopsis</taxon>
    </lineage>
</organism>